<sequence length="255" mass="29869">MQQQQTLSNSFLSRTFVLLYGVFCYFTFLLTCVYAVGFIGNIFLPKSLDSKSQESLVTALLIDVGLLGIFALQHSVMARKQFKAWWTRLIPKPMERSTYVLFSSLALMLVFWQWHPIGITIWNFDNLVGQIIFYSLFALGWVIVLVSTFLINHFDLFGLRQVYLYFEEKEYTPLKFKTPAFYQYVRHPLYVGWFLVFWMTPIMTVAHLVFASVTTIYILVAIQLEEKDLVAIHGEKYENYRRQVPMLIPFIGKKS</sequence>
<dbReference type="EC" id="2.1.1.334" evidence="2"/>
<dbReference type="EMBL" id="CP000806">
    <property type="protein sequence ID" value="ACB51208.1"/>
    <property type="molecule type" value="Genomic_DNA"/>
</dbReference>
<dbReference type="RefSeq" id="WP_009545670.1">
    <property type="nucleotide sequence ID" value="NC_010546.1"/>
</dbReference>
<dbReference type="STRING" id="43989.cce_1858"/>
<dbReference type="KEGG" id="cyt:cce_1858"/>
<dbReference type="eggNOG" id="COG2020">
    <property type="taxonomic scope" value="Bacteria"/>
</dbReference>
<dbReference type="HOGENOM" id="CLU_084189_0_0_3"/>
<dbReference type="OrthoDB" id="9789029at2"/>
<dbReference type="Proteomes" id="UP000001203">
    <property type="component" value="Chromosome circular"/>
</dbReference>
<dbReference type="GO" id="GO:0016020">
    <property type="term" value="C:membrane"/>
    <property type="evidence" value="ECO:0007669"/>
    <property type="project" value="UniProtKB-SubCell"/>
</dbReference>
<dbReference type="GO" id="GO:0008168">
    <property type="term" value="F:methyltransferase activity"/>
    <property type="evidence" value="ECO:0007669"/>
    <property type="project" value="UniProtKB-KW"/>
</dbReference>
<dbReference type="GO" id="GO:0032259">
    <property type="term" value="P:methylation"/>
    <property type="evidence" value="ECO:0007669"/>
    <property type="project" value="UniProtKB-KW"/>
</dbReference>
<dbReference type="Gene3D" id="1.20.120.1630">
    <property type="match status" value="1"/>
</dbReference>
<dbReference type="InterPro" id="IPR054700">
    <property type="entry name" value="MddA"/>
</dbReference>
<dbReference type="InterPro" id="IPR033580">
    <property type="entry name" value="Nurim-like"/>
</dbReference>
<dbReference type="NCBIfam" id="NF045656">
    <property type="entry name" value="MeththiolMtaseMddA"/>
    <property type="match status" value="1"/>
</dbReference>
<dbReference type="PANTHER" id="PTHR31040">
    <property type="entry name" value="NURIM"/>
    <property type="match status" value="1"/>
</dbReference>
<dbReference type="PANTHER" id="PTHR31040:SF1">
    <property type="entry name" value="NURIM"/>
    <property type="match status" value="1"/>
</dbReference>
<keyword id="KW-0472">Membrane</keyword>
<keyword id="KW-0489">Methyltransferase</keyword>
<keyword id="KW-1185">Reference proteome</keyword>
<keyword id="KW-0949">S-adenosyl-L-methionine</keyword>
<keyword id="KW-0808">Transferase</keyword>
<keyword id="KW-0812">Transmembrane</keyword>
<keyword id="KW-1133">Transmembrane helix</keyword>
<reference key="1">
    <citation type="journal article" date="2008" name="Proc. Natl. Acad. Sci. U.S.A.">
        <title>The genome of Cyanothece 51142, a unicellular diazotrophic cyanobacterium important in the marine nitrogen cycle.</title>
        <authorList>
            <person name="Welsh E.A."/>
            <person name="Liberton M."/>
            <person name="Stoeckel J."/>
            <person name="Loh T."/>
            <person name="Elvitigala T."/>
            <person name="Wang C."/>
            <person name="Wollam A."/>
            <person name="Fulton R.S."/>
            <person name="Clifton S.W."/>
            <person name="Jacobs J.M."/>
            <person name="Aurora R."/>
            <person name="Ghosh B.K."/>
            <person name="Sherman L.A."/>
            <person name="Smith R.D."/>
            <person name="Wilson R.K."/>
            <person name="Pakrasi H.B."/>
        </authorList>
    </citation>
    <scope>NUCLEOTIDE SEQUENCE [LARGE SCALE GENOMIC DNA]</scope>
    <source>
        <strain>ATCC 51142 / BH68</strain>
    </source>
</reference>
<reference key="2">
    <citation type="journal article" date="2015" name="Nat. Commun.">
        <title>A novel pathway producing dimethylsulphide in bacteria is widespread in soil environments.</title>
        <authorList>
            <person name="Carrion O."/>
            <person name="Curson A.R."/>
            <person name="Kumaresan D."/>
            <person name="Fu Y."/>
            <person name="Lang A.S."/>
            <person name="Mercade E."/>
            <person name="Todd J.D."/>
        </authorList>
    </citation>
    <scope>FUNCTION</scope>
    <scope>CATALYTIC ACTIVITY</scope>
    <source>
        <strain>ATCC 51142 / BH68</strain>
    </source>
</reference>
<organism>
    <name type="scientific">Crocosphaera subtropica (strain ATCC 51142 / BH68)</name>
    <name type="common">Cyanothece sp. (strain ATCC 51142)</name>
    <dbReference type="NCBI Taxonomy" id="43989"/>
    <lineage>
        <taxon>Bacteria</taxon>
        <taxon>Bacillati</taxon>
        <taxon>Cyanobacteriota</taxon>
        <taxon>Cyanophyceae</taxon>
        <taxon>Oscillatoriophycideae</taxon>
        <taxon>Chroococcales</taxon>
        <taxon>Aphanothecaceae</taxon>
        <taxon>Crocosphaera</taxon>
        <taxon>Crocosphaera subtropica</taxon>
    </lineage>
</organism>
<protein>
    <recommendedName>
        <fullName evidence="3">Methanethiol S-methyltransferase</fullName>
        <ecNumber evidence="2">2.1.1.334</ecNumber>
    </recommendedName>
</protein>
<accession>B1WZQ6</accession>
<name>MDDA_CROS5</name>
<evidence type="ECO:0000255" key="1"/>
<evidence type="ECO:0000269" key="2">
    <source>
    </source>
</evidence>
<evidence type="ECO:0000303" key="3">
    <source>
    </source>
</evidence>
<evidence type="ECO:0000305" key="4"/>
<evidence type="ECO:0000312" key="5">
    <source>
        <dbReference type="EMBL" id="ACB51208.1"/>
    </source>
</evidence>
<proteinExistence type="evidence at protein level"/>
<comment type="function">
    <text evidence="2">Catalyzes the methylation of methanethiol (MeSH) to yield dimethylsulphide (DMS).</text>
</comment>
<comment type="catalytic activity">
    <reaction evidence="2">
        <text>methanethiol + S-adenosyl-L-methionine = dimethyl sulfide + S-adenosyl-L-homocysteine + H(+)</text>
        <dbReference type="Rhea" id="RHEA:50428"/>
        <dbReference type="ChEBI" id="CHEBI:15378"/>
        <dbReference type="ChEBI" id="CHEBI:16007"/>
        <dbReference type="ChEBI" id="CHEBI:17437"/>
        <dbReference type="ChEBI" id="CHEBI:57856"/>
        <dbReference type="ChEBI" id="CHEBI:59789"/>
        <dbReference type="EC" id="2.1.1.334"/>
    </reaction>
</comment>
<comment type="subcellular location">
    <subcellularLocation>
        <location evidence="1">Membrane</location>
        <topology evidence="1">Multi-pass membrane protein</topology>
    </subcellularLocation>
</comment>
<comment type="similarity">
    <text evidence="4">Belongs to the nurim family.</text>
</comment>
<gene>
    <name evidence="3" type="primary">mddA</name>
    <name evidence="5" type="ordered locus">cce_1858</name>
</gene>
<feature type="chain" id="PRO_0000444499" description="Methanethiol S-methyltransferase">
    <location>
        <begin position="1"/>
        <end position="255"/>
    </location>
</feature>
<feature type="transmembrane region" description="Helical" evidence="1">
    <location>
        <begin position="16"/>
        <end position="36"/>
    </location>
</feature>
<feature type="transmembrane region" description="Helical" evidence="1">
    <location>
        <begin position="56"/>
        <end position="76"/>
    </location>
</feature>
<feature type="transmembrane region" description="Helical" evidence="1">
    <location>
        <begin position="99"/>
        <end position="119"/>
    </location>
</feature>
<feature type="transmembrane region" description="Helical" evidence="1">
    <location>
        <begin position="131"/>
        <end position="151"/>
    </location>
</feature>
<feature type="transmembrane region" description="Helical" evidence="1">
    <location>
        <begin position="191"/>
        <end position="211"/>
    </location>
</feature>